<accession>Q1RH28</accession>
<keyword id="KW-0275">Fatty acid biosynthesis</keyword>
<keyword id="KW-0276">Fatty acid metabolism</keyword>
<keyword id="KW-0444">Lipid biosynthesis</keyword>
<keyword id="KW-0443">Lipid metabolism</keyword>
<keyword id="KW-0520">NAD</keyword>
<keyword id="KW-0560">Oxidoreductase</keyword>
<comment type="function">
    <text evidence="1">Catalyzes the reduction of a carbon-carbon double bond in an enoyl moiety that is covalently linked to an acyl carrier protein (ACP). Involved in the elongation cycle of fatty acid which are used in the lipid metabolism (By similarity).</text>
</comment>
<comment type="catalytic activity">
    <reaction>
        <text>a 2,3-saturated acyl-[ACP] + NAD(+) = a (2E)-enoyl-[ACP] + NADH + H(+)</text>
        <dbReference type="Rhea" id="RHEA:10240"/>
        <dbReference type="Rhea" id="RHEA-COMP:9925"/>
        <dbReference type="Rhea" id="RHEA-COMP:9926"/>
        <dbReference type="ChEBI" id="CHEBI:15378"/>
        <dbReference type="ChEBI" id="CHEBI:57540"/>
        <dbReference type="ChEBI" id="CHEBI:57945"/>
        <dbReference type="ChEBI" id="CHEBI:78784"/>
        <dbReference type="ChEBI" id="CHEBI:78785"/>
        <dbReference type="EC" id="1.3.1.9"/>
    </reaction>
</comment>
<comment type="pathway">
    <text>Lipid metabolism; fatty acid biosynthesis.</text>
</comment>
<comment type="subunit">
    <text evidence="1">Homotetramer.</text>
</comment>
<comment type="similarity">
    <text evidence="2">Belongs to the short-chain dehydrogenases/reductases (SDR) family. FabI subfamily.</text>
</comment>
<reference key="1">
    <citation type="journal article" date="2006" name="PLoS Genet.">
        <title>Genome sequence of Rickettsia bellii illuminates the role of amoebae in gene exchanges between intracellular pathogens.</title>
        <authorList>
            <person name="Ogata H."/>
            <person name="La Scola B."/>
            <person name="Audic S."/>
            <person name="Renesto P."/>
            <person name="Blanc G."/>
            <person name="Robert C."/>
            <person name="Fournier P.-E."/>
            <person name="Claverie J.-M."/>
            <person name="Raoult D."/>
        </authorList>
    </citation>
    <scope>NUCLEOTIDE SEQUENCE [LARGE SCALE GENOMIC DNA]</scope>
    <source>
        <strain>RML369-C</strain>
    </source>
</reference>
<organism>
    <name type="scientific">Rickettsia bellii (strain RML369-C)</name>
    <dbReference type="NCBI Taxonomy" id="336407"/>
    <lineage>
        <taxon>Bacteria</taxon>
        <taxon>Pseudomonadati</taxon>
        <taxon>Pseudomonadota</taxon>
        <taxon>Alphaproteobacteria</taxon>
        <taxon>Rickettsiales</taxon>
        <taxon>Rickettsiaceae</taxon>
        <taxon>Rickettsieae</taxon>
        <taxon>Rickettsia</taxon>
        <taxon>belli group</taxon>
    </lineage>
</organism>
<name>FABI_RICBR</name>
<evidence type="ECO:0000250" key="1"/>
<evidence type="ECO:0000305" key="2"/>
<dbReference type="EC" id="1.3.1.9"/>
<dbReference type="EMBL" id="CP000087">
    <property type="protein sequence ID" value="ABE05336.1"/>
    <property type="molecule type" value="Genomic_DNA"/>
</dbReference>
<dbReference type="RefSeq" id="WP_011477908.1">
    <property type="nucleotide sequence ID" value="NC_007940.1"/>
</dbReference>
<dbReference type="SMR" id="Q1RH28"/>
<dbReference type="KEGG" id="rbe:RBE_1255"/>
<dbReference type="eggNOG" id="COG0623">
    <property type="taxonomic scope" value="Bacteria"/>
</dbReference>
<dbReference type="HOGENOM" id="CLU_010194_10_1_5"/>
<dbReference type="OrthoDB" id="9803628at2"/>
<dbReference type="UniPathway" id="UPA00094"/>
<dbReference type="Proteomes" id="UP000001951">
    <property type="component" value="Chromosome"/>
</dbReference>
<dbReference type="GO" id="GO:0004318">
    <property type="term" value="F:enoyl-[acyl-carrier-protein] reductase (NADH) activity"/>
    <property type="evidence" value="ECO:0000250"/>
    <property type="project" value="UniProtKB"/>
</dbReference>
<dbReference type="GO" id="GO:0042802">
    <property type="term" value="F:identical protein binding"/>
    <property type="evidence" value="ECO:0000250"/>
    <property type="project" value="UniProtKB"/>
</dbReference>
<dbReference type="GO" id="GO:0030497">
    <property type="term" value="P:fatty acid elongation"/>
    <property type="evidence" value="ECO:0000250"/>
    <property type="project" value="UniProtKB"/>
</dbReference>
<dbReference type="CDD" id="cd05372">
    <property type="entry name" value="ENR_SDR"/>
    <property type="match status" value="1"/>
</dbReference>
<dbReference type="FunFam" id="1.10.8.400:FF:000001">
    <property type="entry name" value="Enoyl-[acyl-carrier-protein] reductase [NADH]"/>
    <property type="match status" value="1"/>
</dbReference>
<dbReference type="FunFam" id="3.40.50.720:FF:000054">
    <property type="entry name" value="Enoyl-[acyl-carrier-protein] reductase [NADH]"/>
    <property type="match status" value="1"/>
</dbReference>
<dbReference type="Gene3D" id="1.10.8.400">
    <property type="entry name" value="Enoyl acyl carrier protein reductase"/>
    <property type="match status" value="1"/>
</dbReference>
<dbReference type="Gene3D" id="3.40.50.720">
    <property type="entry name" value="NAD(P)-binding Rossmann-like Domain"/>
    <property type="match status" value="1"/>
</dbReference>
<dbReference type="InterPro" id="IPR014358">
    <property type="entry name" value="Enoyl-ACP_Rdtase_NADH"/>
</dbReference>
<dbReference type="InterPro" id="IPR036291">
    <property type="entry name" value="NAD(P)-bd_dom_sf"/>
</dbReference>
<dbReference type="InterPro" id="IPR002347">
    <property type="entry name" value="SDR_fam"/>
</dbReference>
<dbReference type="NCBIfam" id="NF005145">
    <property type="entry name" value="PRK06603.1"/>
    <property type="match status" value="1"/>
</dbReference>
<dbReference type="PANTHER" id="PTHR43159">
    <property type="entry name" value="ENOYL-[ACYL-CARRIER-PROTEIN] REDUCTASE"/>
    <property type="match status" value="1"/>
</dbReference>
<dbReference type="PANTHER" id="PTHR43159:SF2">
    <property type="entry name" value="ENOYL-[ACYL-CARRIER-PROTEIN] REDUCTASE [NADH], CHLOROPLASTIC"/>
    <property type="match status" value="1"/>
</dbReference>
<dbReference type="Pfam" id="PF13561">
    <property type="entry name" value="adh_short_C2"/>
    <property type="match status" value="1"/>
</dbReference>
<dbReference type="PIRSF" id="PIRSF000094">
    <property type="entry name" value="Enoyl-ACP_rdct"/>
    <property type="match status" value="1"/>
</dbReference>
<dbReference type="PRINTS" id="PR00081">
    <property type="entry name" value="GDHRDH"/>
</dbReference>
<dbReference type="SUPFAM" id="SSF51735">
    <property type="entry name" value="NAD(P)-binding Rossmann-fold domains"/>
    <property type="match status" value="1"/>
</dbReference>
<proteinExistence type="inferred from homology"/>
<sequence>MTTGLLQGKRGIITGIANNMSISWAIAQLARKHGAELCFTYQSEILEKRVKPLAEEVGCNFVSELDVTNPESITNLFAEVKEKWGTFDFLLHGMAFSDRNELKGRYIDTSLGNFNNSLHISCYSLVELAREAEKLMNDGGSIVTLSYYGAEKVIPNYNVMGVAKAALEASVRYLANDMGENNIRVNAISAGPIKTLSGSVIGDFNSMLRSHAATAPLKRNTLQQDVAGAAVYLFSQLASGVTGEIHYVDCGYNVMGSNKIVG</sequence>
<protein>
    <recommendedName>
        <fullName>Enoyl-[acyl-carrier-protein] reductase [NADH] FabI</fullName>
        <shortName>ENR</shortName>
        <ecNumber>1.3.1.9</ecNumber>
    </recommendedName>
    <alternativeName>
        <fullName>NADH-dependent enoyl-ACP reductase</fullName>
    </alternativeName>
</protein>
<feature type="chain" id="PRO_0000286635" description="Enoyl-[acyl-carrier-protein] reductase [NADH] FabI">
    <location>
        <begin position="1"/>
        <end position="262"/>
    </location>
</feature>
<feature type="active site" description="Proton acceptor" evidence="1">
    <location>
        <position position="147"/>
    </location>
</feature>
<feature type="active site" description="Proton acceptor" evidence="1">
    <location>
        <position position="157"/>
    </location>
</feature>
<feature type="binding site" evidence="1">
    <location>
        <position position="15"/>
    </location>
    <ligand>
        <name>NAD(+)</name>
        <dbReference type="ChEBI" id="CHEBI:57540"/>
    </ligand>
</feature>
<feature type="binding site" evidence="1">
    <location>
        <begin position="21"/>
        <end position="22"/>
    </location>
    <ligand>
        <name>NAD(+)</name>
        <dbReference type="ChEBI" id="CHEBI:57540"/>
    </ligand>
</feature>
<feature type="binding site" evidence="1">
    <location>
        <position position="42"/>
    </location>
    <ligand>
        <name>NAD(+)</name>
        <dbReference type="ChEBI" id="CHEBI:57540"/>
    </ligand>
</feature>
<feature type="binding site" evidence="1">
    <location>
        <begin position="66"/>
        <end position="67"/>
    </location>
    <ligand>
        <name>NAD(+)</name>
        <dbReference type="ChEBI" id="CHEBI:57540"/>
    </ligand>
</feature>
<feature type="binding site" evidence="1">
    <location>
        <position position="94"/>
    </location>
    <ligand>
        <name>NAD(+)</name>
        <dbReference type="ChEBI" id="CHEBI:57540"/>
    </ligand>
</feature>
<feature type="binding site" evidence="1">
    <location>
        <position position="97"/>
    </location>
    <ligand>
        <name>substrate</name>
    </ligand>
</feature>
<feature type="binding site" evidence="1">
    <location>
        <position position="164"/>
    </location>
    <ligand>
        <name>NAD(+)</name>
        <dbReference type="ChEBI" id="CHEBI:57540"/>
    </ligand>
</feature>
<feature type="binding site" evidence="1">
    <location>
        <begin position="193"/>
        <end position="197"/>
    </location>
    <ligand>
        <name>NAD(+)</name>
        <dbReference type="ChEBI" id="CHEBI:57540"/>
    </ligand>
</feature>
<feature type="site" description="Involved in acyl-ACP binding" evidence="1">
    <location>
        <position position="205"/>
    </location>
</feature>
<gene>
    <name type="primary">fabI</name>
    <name type="ordered locus">RBE_1255</name>
</gene>